<accession>P39185</accession>
<accession>Q7WXC3</accession>
<evidence type="ECO:0000255" key="1">
    <source>
        <dbReference type="HAMAP-Rule" id="MF_01630"/>
    </source>
</evidence>
<evidence type="ECO:0000269" key="2">
    <source>
    </source>
</evidence>
<evidence type="ECO:0000269" key="3">
    <source>
    </source>
</evidence>
<evidence type="ECO:0000303" key="4">
    <source>
    </source>
</evidence>
<evidence type="ECO:0000305" key="5"/>
<evidence type="ECO:0000305" key="6">
    <source>
    </source>
</evidence>
<evidence type="ECO:0007744" key="7">
    <source>
        <dbReference type="PDB" id="3ML1"/>
    </source>
</evidence>
<evidence type="ECO:0007744" key="8">
    <source>
        <dbReference type="PDB" id="3O5A"/>
    </source>
</evidence>
<evidence type="ECO:0007829" key="9">
    <source>
        <dbReference type="PDB" id="3ML1"/>
    </source>
</evidence>
<comment type="function">
    <text evidence="1 3">Catalytic subunit of the periplasmic nitrate reductase complex NapAB. Receives electrons from NapB and catalyzes the reduction of nitrate to nitrite.</text>
</comment>
<comment type="catalytic activity">
    <reaction evidence="1 3">
        <text>2 Fe(II)-[cytochrome] + nitrate + 2 H(+) = 2 Fe(III)-[cytochrome] + nitrite + H2O</text>
        <dbReference type="Rhea" id="RHEA:12909"/>
        <dbReference type="Rhea" id="RHEA-COMP:11777"/>
        <dbReference type="Rhea" id="RHEA-COMP:11778"/>
        <dbReference type="ChEBI" id="CHEBI:15377"/>
        <dbReference type="ChEBI" id="CHEBI:15378"/>
        <dbReference type="ChEBI" id="CHEBI:16301"/>
        <dbReference type="ChEBI" id="CHEBI:17632"/>
        <dbReference type="ChEBI" id="CHEBI:29033"/>
        <dbReference type="ChEBI" id="CHEBI:29034"/>
        <dbReference type="EC" id="1.9.6.1"/>
    </reaction>
</comment>
<comment type="cofactor">
    <cofactor evidence="1 2">
        <name>[4Fe-4S] cluster</name>
        <dbReference type="ChEBI" id="CHEBI:49883"/>
    </cofactor>
    <text evidence="1 2">Binds 1 [4Fe-4S] cluster.</text>
</comment>
<comment type="cofactor">
    <cofactor evidence="1 2">
        <name>Mo-bis(molybdopterin guanine dinucleotide)</name>
        <dbReference type="ChEBI" id="CHEBI:60539"/>
    </cofactor>
    <text evidence="1 2">Binds 1 molybdenum-bis(molybdopterin guanine dinucleotide) (Mo-bis-MGD) cofactor per subunit.</text>
</comment>
<comment type="subunit">
    <text evidence="1 2 3">Component of the periplasmic nitrate reductase NapAB complex composed of NapA and NapB.</text>
</comment>
<comment type="subcellular location">
    <subcellularLocation>
        <location evidence="1 6">Periplasm</location>
    </subcellularLocation>
</comment>
<comment type="induction">
    <text>Expressed independently of nitrate induction and anaerobiosis.</text>
</comment>
<comment type="PTM">
    <text evidence="1 3">Predicted to be exported by the Tat system (By similarity). The position of the signal peptide cleavage has been experimentally proven (PubMed:8376334).</text>
</comment>
<comment type="similarity">
    <text evidence="1">Belongs to the prokaryotic molybdopterin-containing oxidoreductase family. NasA/NapA/NarB subfamily.</text>
</comment>
<proteinExistence type="evidence at protein level"/>
<reference key="1">
    <citation type="journal article" date="1993" name="J. Bacteriol.">
        <title>Structure and function of a periplasmic nitrate reductase in Alcaligenes eutrophus H16.</title>
        <authorList>
            <person name="Siddiqui R.A."/>
            <person name="Warnecke-Eberz U."/>
            <person name="Hengsberger A."/>
            <person name="Schneider B."/>
            <person name="Kostka S."/>
            <person name="Friedrich B."/>
        </authorList>
    </citation>
    <scope>NUCLEOTIDE SEQUENCE [GENOMIC DNA]</scope>
    <scope>PROTEIN SEQUENCE OF 30-50</scope>
    <scope>FUNCTION</scope>
    <scope>CATALYTIC ACTIVITY</scope>
    <scope>SUBUNIT</scope>
    <scope>SUBCELLULAR LOCATION</scope>
    <source>
        <strain>ATCC 17699 / DSM 428 / KCTC 22496 / NCIMB 10442 / H16 / Stanier 337</strain>
    </source>
</reference>
<reference key="2">
    <citation type="journal article" date="2003" name="J. Mol. Biol.">
        <title>Complete nucleotide sequence of pHG1: a Ralstonia eutropha H16 megaplasmid encoding key enzymes of H(2)-based lithoautotrophy and anaerobiosis.</title>
        <authorList>
            <person name="Schwartz E."/>
            <person name="Henne A."/>
            <person name="Cramm R."/>
            <person name="Eitinger T."/>
            <person name="Friedrich B."/>
            <person name="Gottschalk G."/>
        </authorList>
    </citation>
    <scope>NUCLEOTIDE SEQUENCE [LARGE SCALE GENOMIC DNA]</scope>
    <source>
        <strain>ATCC 17699 / DSM 428 / KCTC 22496 / NCIMB 10442 / H16 / Stanier 337</strain>
    </source>
</reference>
<reference evidence="7 8" key="3">
    <citation type="journal article" date="2011" name="J. Mol. Biol.">
        <title>The crystal structure of Cupriavidus necator nitrate reductase in oxidized and partially reduced states.</title>
        <authorList>
            <person name="Coelho C."/>
            <person name="Gonzalez P.J."/>
            <person name="Moura J.G."/>
            <person name="Moura I."/>
            <person name="Trincao J."/>
            <person name="Joao Romao M."/>
        </authorList>
    </citation>
    <scope>X-RAY CRYSTALLOGRAPHY (1.60 ANGSTROMS) OF 30-831 IN COMPLEX WITH IRON-SULFUR (4FE-4S) AND MOLYBDENUM MOLYBDOPTERIN COFACTOR</scope>
    <scope>COFACTOR</scope>
    <scope>SUBUNIT</scope>
</reference>
<geneLocation type="plasmid">
    <name>megaplasmid pHG1</name>
</geneLocation>
<keyword id="KW-0002">3D-structure</keyword>
<keyword id="KW-0004">4Fe-4S</keyword>
<keyword id="KW-0903">Direct protein sequencing</keyword>
<keyword id="KW-0249">Electron transport</keyword>
<keyword id="KW-0408">Iron</keyword>
<keyword id="KW-0411">Iron-sulfur</keyword>
<keyword id="KW-0479">Metal-binding</keyword>
<keyword id="KW-0500">Molybdenum</keyword>
<keyword id="KW-0534">Nitrate assimilation</keyword>
<keyword id="KW-0560">Oxidoreductase</keyword>
<keyword id="KW-0574">Periplasm</keyword>
<keyword id="KW-0614">Plasmid</keyword>
<keyword id="KW-1185">Reference proteome</keyword>
<keyword id="KW-0732">Signal</keyword>
<keyword id="KW-0813">Transport</keyword>
<sequence>MKISRRDFIKQTAITATASVAGVTLPAGAANFVTDSEVTKLKWSKAPCRFCGTGCGVTVAVKDNKVVATQGDPQAEVNKGLNCVKGYFLSKIMYGQDRLTRPLMRMKNGKYDKNGDFAPVTWDQAFDEMERQFKRVLKEKGPTAVGMFGSGQWTVWEGYAAAKLYKAGFRSNNIDPNARHCMASAAAGFMRTFGMDEPMGCYDDFEAADAFVLWGSNMAEMHPILWTRVTDRRLSHPKTRVVVLSTFTHRCFDLADIGIIFKPQTDLAMLNYIANYIIRNNKVNKDFVNKHTVFKEGVTDIGYGLRPDHPLQKAAKNASDPGAAKVITFDEFAKFVSKYDADYVSKLSAVPKAKLDQLAELYADPNIKVMSLWTMGFNQHTRGTWANNMVYNLHLLTGKIATPGNSPFSLTGQPSACGTAREVGTFSHRLPADMVVTNPKHREEAERIWKLPPGTIPDKPGYDAVLQNRMLKDGKLNAYWVQVNNNMQAAANLMEEGLPGYRNPANFIVVSDAYPTVTALAADLVLPSAMWVEKEGAYGNAERRTQFWHQLVDAPGEARSDLWQLVEFAKRFKVEEVWPPELIAKKPEYKGKTLYDVLYRNGQVDKFPLKDVNAEYHNAEAKAFGFYLQKGLFEEYATFGRGHGHDLAPFDAYHEARGLRWPVVNGKETRWRYREGSDPYVKAGTGFQFYGNPDGKAVIFALPYEPPAESPDKEYPYWLVTGRVLEHWHSGSMTRRVPELYRSFPNAVVFMHPEDAKALGLRRGVEVEVVSRRGRMRSRIETRGRDAPPRGLVFVPWFDASQLINKVTLDATCPISLQTDFKKCAVKIVKV</sequence>
<protein>
    <recommendedName>
        <fullName evidence="1">Periplasmic nitrate reductase</fullName>
        <ecNumber evidence="1">1.9.6.1</ecNumber>
    </recommendedName>
</protein>
<organism>
    <name type="scientific">Cupriavidus necator (strain ATCC 17699 / DSM 428 / KCTC 22496 / NCIMB 10442 / H16 / Stanier 337)</name>
    <name type="common">Ralstonia eutropha</name>
    <dbReference type="NCBI Taxonomy" id="381666"/>
    <lineage>
        <taxon>Bacteria</taxon>
        <taxon>Pseudomonadati</taxon>
        <taxon>Pseudomonadota</taxon>
        <taxon>Betaproteobacteria</taxon>
        <taxon>Burkholderiales</taxon>
        <taxon>Burkholderiaceae</taxon>
        <taxon>Cupriavidus</taxon>
    </lineage>
</organism>
<feature type="signal peptide" description="Tat-type signal" evidence="1 3">
    <location>
        <begin position="1"/>
        <end position="29"/>
    </location>
</feature>
<feature type="chain" id="PRO_0000019168" description="Periplasmic nitrate reductase" evidence="1">
    <location>
        <begin position="30"/>
        <end position="831"/>
    </location>
</feature>
<feature type="domain" description="4Fe-4S Mo/W bis-MGD-type" evidence="1">
    <location>
        <begin position="41"/>
        <end position="97"/>
    </location>
</feature>
<feature type="binding site" evidence="1 2 7 8">
    <location>
        <position position="48"/>
    </location>
    <ligand>
        <name>[4Fe-4S] cluster</name>
        <dbReference type="ChEBI" id="CHEBI:49883"/>
    </ligand>
</feature>
<feature type="binding site" evidence="1 2 7 8">
    <location>
        <position position="51"/>
    </location>
    <ligand>
        <name>[4Fe-4S] cluster</name>
        <dbReference type="ChEBI" id="CHEBI:49883"/>
    </ligand>
</feature>
<feature type="binding site" evidence="1 2 7 8">
    <location>
        <position position="55"/>
    </location>
    <ligand>
        <name>[4Fe-4S] cluster</name>
        <dbReference type="ChEBI" id="CHEBI:49883"/>
    </ligand>
</feature>
<feature type="binding site" evidence="1 2 7 8">
    <location>
        <position position="83"/>
    </location>
    <ligand>
        <name>[4Fe-4S] cluster</name>
        <dbReference type="ChEBI" id="CHEBI:49883"/>
    </ligand>
</feature>
<feature type="binding site" evidence="1 2 7 8">
    <location>
        <position position="85"/>
    </location>
    <ligand>
        <name>Mo-bis(molybdopterin guanine dinucleotide)</name>
        <dbReference type="ChEBI" id="CHEBI:60539"/>
    </ligand>
</feature>
<feature type="binding site" evidence="1 2 7 8">
    <location>
        <position position="152"/>
    </location>
    <ligand>
        <name>Mo-bis(molybdopterin guanine dinucleotide)</name>
        <dbReference type="ChEBI" id="CHEBI:60539"/>
    </ligand>
</feature>
<feature type="binding site" evidence="1 2 7 8">
    <location>
        <position position="177"/>
    </location>
    <ligand>
        <name>Mo-bis(molybdopterin guanine dinucleotide)</name>
        <dbReference type="ChEBI" id="CHEBI:60539"/>
    </ligand>
</feature>
<feature type="binding site" evidence="1 2 7 8">
    <location>
        <position position="181"/>
    </location>
    <ligand>
        <name>Mo-bis(molybdopterin guanine dinucleotide)</name>
        <dbReference type="ChEBI" id="CHEBI:60539"/>
    </ligand>
</feature>
<feature type="binding site" evidence="1 2 7 8">
    <location>
        <begin position="214"/>
        <end position="221"/>
    </location>
    <ligand>
        <name>Mo-bis(molybdopterin guanine dinucleotide)</name>
        <dbReference type="ChEBI" id="CHEBI:60539"/>
    </ligand>
</feature>
<feature type="binding site" evidence="1 2 7 8">
    <location>
        <begin position="245"/>
        <end position="249"/>
    </location>
    <ligand>
        <name>Mo-bis(molybdopterin guanine dinucleotide)</name>
        <dbReference type="ChEBI" id="CHEBI:60539"/>
    </ligand>
</feature>
<feature type="binding site" evidence="1 2 7 8">
    <location>
        <begin position="264"/>
        <end position="266"/>
    </location>
    <ligand>
        <name>Mo-bis(molybdopterin guanine dinucleotide)</name>
        <dbReference type="ChEBI" id="CHEBI:60539"/>
    </ligand>
</feature>
<feature type="binding site" evidence="1 2 7 8">
    <location>
        <position position="375"/>
    </location>
    <ligand>
        <name>Mo-bis(molybdopterin guanine dinucleotide)</name>
        <dbReference type="ChEBI" id="CHEBI:60539"/>
    </ligand>
</feature>
<feature type="binding site" evidence="1 2 7 8">
    <location>
        <position position="379"/>
    </location>
    <ligand>
        <name>Mo-bis(molybdopterin guanine dinucleotide)</name>
        <dbReference type="ChEBI" id="CHEBI:60539"/>
    </ligand>
</feature>
<feature type="binding site" evidence="1 2 7 8">
    <location>
        <position position="485"/>
    </location>
    <ligand>
        <name>Mo-bis(molybdopterin guanine dinucleotide)</name>
        <dbReference type="ChEBI" id="CHEBI:60539"/>
    </ligand>
</feature>
<feature type="binding site" evidence="1 2 7 8">
    <location>
        <begin position="511"/>
        <end position="512"/>
    </location>
    <ligand>
        <name>Mo-bis(molybdopterin guanine dinucleotide)</name>
        <dbReference type="ChEBI" id="CHEBI:60539"/>
    </ligand>
</feature>
<feature type="binding site" evidence="1 2 7 8">
    <location>
        <position position="534"/>
    </location>
    <ligand>
        <name>Mo-bis(molybdopterin guanine dinucleotide)</name>
        <dbReference type="ChEBI" id="CHEBI:60539"/>
    </ligand>
</feature>
<feature type="binding site" evidence="1 2 7 8">
    <location>
        <position position="561"/>
    </location>
    <ligand>
        <name>Mo-bis(molybdopterin guanine dinucleotide)</name>
        <dbReference type="ChEBI" id="CHEBI:60539"/>
    </ligand>
</feature>
<feature type="binding site" evidence="1 2 7 8">
    <location>
        <begin position="721"/>
        <end position="730"/>
    </location>
    <ligand>
        <name>Mo-bis(molybdopterin guanine dinucleotide)</name>
        <dbReference type="ChEBI" id="CHEBI:60539"/>
    </ligand>
</feature>
<feature type="binding site" evidence="1">
    <location>
        <position position="797"/>
    </location>
    <ligand>
        <name>substrate</name>
    </ligand>
</feature>
<feature type="binding site" evidence="1 2 7 8">
    <location>
        <position position="805"/>
    </location>
    <ligand>
        <name>Mo-bis(molybdopterin guanine dinucleotide)</name>
        <dbReference type="ChEBI" id="CHEBI:60539"/>
    </ligand>
</feature>
<feature type="binding site" evidence="1 2 7 8">
    <location>
        <position position="822"/>
    </location>
    <ligand>
        <name>Mo-bis(molybdopterin guanine dinucleotide)</name>
        <dbReference type="ChEBI" id="CHEBI:60539"/>
    </ligand>
</feature>
<feature type="sequence conflict" description="In Ref. 1; CAA50507." evidence="5" ref="1">
    <original>GMFGSG</original>
    <variation>ACSAPA</variation>
    <location>
        <begin position="146"/>
        <end position="151"/>
    </location>
</feature>
<feature type="strand" evidence="9">
    <location>
        <begin position="40"/>
        <end position="47"/>
    </location>
</feature>
<feature type="strand" evidence="9">
    <location>
        <begin position="56"/>
        <end position="62"/>
    </location>
</feature>
<feature type="strand" evidence="9">
    <location>
        <begin position="65"/>
        <end position="71"/>
    </location>
</feature>
<feature type="turn" evidence="9">
    <location>
        <begin position="76"/>
        <end position="80"/>
    </location>
</feature>
<feature type="helix" evidence="9">
    <location>
        <begin position="84"/>
        <end position="87"/>
    </location>
</feature>
<feature type="helix" evidence="9">
    <location>
        <begin position="88"/>
        <end position="91"/>
    </location>
</feature>
<feature type="strand" evidence="9">
    <location>
        <begin position="103"/>
        <end position="107"/>
    </location>
</feature>
<feature type="strand" evidence="9">
    <location>
        <begin position="115"/>
        <end position="119"/>
    </location>
</feature>
<feature type="helix" evidence="9">
    <location>
        <begin position="122"/>
        <end position="139"/>
    </location>
</feature>
<feature type="helix" evidence="9">
    <location>
        <begin position="142"/>
        <end position="144"/>
    </location>
</feature>
<feature type="strand" evidence="9">
    <location>
        <begin position="145"/>
        <end position="149"/>
    </location>
</feature>
<feature type="helix" evidence="9">
    <location>
        <begin position="155"/>
        <end position="166"/>
    </location>
</feature>
<feature type="turn" evidence="9">
    <location>
        <begin position="167"/>
        <end position="169"/>
    </location>
</feature>
<feature type="strand" evidence="9">
    <location>
        <begin position="174"/>
        <end position="176"/>
    </location>
</feature>
<feature type="helix" evidence="9">
    <location>
        <begin position="177"/>
        <end position="180"/>
    </location>
</feature>
<feature type="helix" evidence="9">
    <location>
        <begin position="183"/>
        <end position="193"/>
    </location>
</feature>
<feature type="helix" evidence="9">
    <location>
        <begin position="202"/>
        <end position="206"/>
    </location>
</feature>
<feature type="strand" evidence="9">
    <location>
        <begin position="209"/>
        <end position="215"/>
    </location>
</feature>
<feature type="helix" evidence="9">
    <location>
        <begin position="218"/>
        <end position="221"/>
    </location>
</feature>
<feature type="helix" evidence="9">
    <location>
        <begin position="223"/>
        <end position="235"/>
    </location>
</feature>
<feature type="strand" evidence="9">
    <location>
        <begin position="240"/>
        <end position="248"/>
    </location>
</feature>
<feature type="helix" evidence="9">
    <location>
        <begin position="250"/>
        <end position="253"/>
    </location>
</feature>
<feature type="strand" evidence="9">
    <location>
        <begin position="256"/>
        <end position="260"/>
    </location>
</feature>
<feature type="turn" evidence="9">
    <location>
        <begin position="263"/>
        <end position="265"/>
    </location>
</feature>
<feature type="helix" evidence="9">
    <location>
        <begin position="266"/>
        <end position="279"/>
    </location>
</feature>
<feature type="helix" evidence="9">
    <location>
        <begin position="285"/>
        <end position="291"/>
    </location>
</feature>
<feature type="strand" evidence="9">
    <location>
        <begin position="292"/>
        <end position="297"/>
    </location>
</feature>
<feature type="helix" evidence="9">
    <location>
        <begin position="310"/>
        <end position="314"/>
    </location>
</feature>
<feature type="strand" evidence="9">
    <location>
        <begin position="324"/>
        <end position="327"/>
    </location>
</feature>
<feature type="helix" evidence="9">
    <location>
        <begin position="329"/>
        <end position="337"/>
    </location>
</feature>
<feature type="helix" evidence="9">
    <location>
        <begin position="341"/>
        <end position="348"/>
    </location>
</feature>
<feature type="helix" evidence="9">
    <location>
        <begin position="352"/>
        <end position="363"/>
    </location>
</feature>
<feature type="strand" evidence="9">
    <location>
        <begin position="369"/>
        <end position="374"/>
    </location>
</feature>
<feature type="helix" evidence="9">
    <location>
        <begin position="375"/>
        <end position="378"/>
    </location>
</feature>
<feature type="helix" evidence="9">
    <location>
        <begin position="383"/>
        <end position="397"/>
    </location>
</feature>
<feature type="strand" evidence="9">
    <location>
        <begin position="405"/>
        <end position="409"/>
    </location>
</feature>
<feature type="turn" evidence="9">
    <location>
        <begin position="414"/>
        <end position="419"/>
    </location>
</feature>
<feature type="helix" evidence="9">
    <location>
        <begin position="420"/>
        <end position="423"/>
    </location>
</feature>
<feature type="helix" evidence="9">
    <location>
        <begin position="439"/>
        <end position="448"/>
    </location>
</feature>
<feature type="helix" evidence="9">
    <location>
        <begin position="464"/>
        <end position="472"/>
    </location>
</feature>
<feature type="strand" evidence="9">
    <location>
        <begin position="478"/>
        <end position="483"/>
    </location>
</feature>
<feature type="helix" evidence="9">
    <location>
        <begin position="486"/>
        <end position="489"/>
    </location>
</feature>
<feature type="turn" evidence="9">
    <location>
        <begin position="493"/>
        <end position="496"/>
    </location>
</feature>
<feature type="helix" evidence="9">
    <location>
        <begin position="497"/>
        <end position="502"/>
    </location>
</feature>
<feature type="strand" evidence="9">
    <location>
        <begin position="507"/>
        <end position="514"/>
    </location>
</feature>
<feature type="helix" evidence="9">
    <location>
        <begin position="517"/>
        <end position="520"/>
    </location>
</feature>
<feature type="strand" evidence="9">
    <location>
        <begin position="523"/>
        <end position="529"/>
    </location>
</feature>
<feature type="helix" evidence="9">
    <location>
        <begin position="531"/>
        <end position="533"/>
    </location>
</feature>
<feature type="strand" evidence="9">
    <location>
        <begin position="536"/>
        <end position="539"/>
    </location>
</feature>
<feature type="strand" evidence="9">
    <location>
        <begin position="543"/>
        <end position="548"/>
    </location>
</feature>
<feature type="helix" evidence="9">
    <location>
        <begin position="561"/>
        <end position="569"/>
    </location>
</feature>
<feature type="helix" evidence="9">
    <location>
        <begin position="574"/>
        <end position="577"/>
    </location>
</feature>
<feature type="helix" evidence="9">
    <location>
        <begin position="580"/>
        <end position="583"/>
    </location>
</feature>
<feature type="helix" evidence="9">
    <location>
        <begin position="587"/>
        <end position="589"/>
    </location>
</feature>
<feature type="helix" evidence="9">
    <location>
        <begin position="594"/>
        <end position="598"/>
    </location>
</feature>
<feature type="strand" evidence="9">
    <location>
        <begin position="600"/>
        <end position="603"/>
    </location>
</feature>
<feature type="helix" evidence="9">
    <location>
        <begin position="609"/>
        <end position="611"/>
    </location>
</feature>
<feature type="helix" evidence="9">
    <location>
        <begin position="619"/>
        <end position="624"/>
    </location>
</feature>
<feature type="helix" evidence="9">
    <location>
        <begin position="628"/>
        <end position="640"/>
    </location>
</feature>
<feature type="turn" evidence="9">
    <location>
        <begin position="641"/>
        <end position="644"/>
    </location>
</feature>
<feature type="helix" evidence="9">
    <location>
        <begin position="650"/>
        <end position="655"/>
    </location>
</feature>
<feature type="strand" evidence="9">
    <location>
        <begin position="659"/>
        <end position="662"/>
    </location>
</feature>
<feature type="strand" evidence="9">
    <location>
        <begin position="670"/>
        <end position="674"/>
    </location>
</feature>
<feature type="turn" evidence="9">
    <location>
        <begin position="675"/>
        <end position="677"/>
    </location>
</feature>
<feature type="strand" evidence="9">
    <location>
        <begin position="697"/>
        <end position="701"/>
    </location>
</feature>
<feature type="strand" evidence="9">
    <location>
        <begin position="713"/>
        <end position="715"/>
    </location>
</feature>
<feature type="strand" evidence="9">
    <location>
        <begin position="717"/>
        <end position="722"/>
    </location>
</feature>
<feature type="helix" evidence="9">
    <location>
        <begin position="734"/>
        <end position="736"/>
    </location>
</feature>
<feature type="helix" evidence="9">
    <location>
        <begin position="738"/>
        <end position="743"/>
    </location>
</feature>
<feature type="strand" evidence="9">
    <location>
        <begin position="748"/>
        <end position="751"/>
    </location>
</feature>
<feature type="helix" evidence="9">
    <location>
        <begin position="753"/>
        <end position="758"/>
    </location>
</feature>
<feature type="strand" evidence="9">
    <location>
        <begin position="766"/>
        <end position="770"/>
    </location>
</feature>
<feature type="strand" evidence="9">
    <location>
        <begin position="775"/>
        <end position="785"/>
    </location>
</feature>
<feature type="strand" evidence="9">
    <location>
        <begin position="792"/>
        <end position="797"/>
    </location>
</feature>
<feature type="helix" evidence="9">
    <location>
        <begin position="804"/>
        <end position="806"/>
    </location>
</feature>
<feature type="turn" evidence="9">
    <location>
        <begin position="814"/>
        <end position="816"/>
    </location>
</feature>
<feature type="strand" evidence="9">
    <location>
        <begin position="824"/>
        <end position="830"/>
    </location>
</feature>
<dbReference type="EC" id="1.9.6.1" evidence="1"/>
<dbReference type="EMBL" id="X71385">
    <property type="protein sequence ID" value="CAA50507.1"/>
    <property type="molecule type" value="Genomic_DNA"/>
</dbReference>
<dbReference type="EMBL" id="AY305378">
    <property type="protein sequence ID" value="AAP85963.1"/>
    <property type="molecule type" value="Genomic_DNA"/>
</dbReference>
<dbReference type="PIR" id="A48489">
    <property type="entry name" value="A48489"/>
</dbReference>
<dbReference type="RefSeq" id="WP_011154126.1">
    <property type="nucleotide sequence ID" value="NC_005241.1"/>
</dbReference>
<dbReference type="PDB" id="3ML1">
    <property type="method" value="X-ray"/>
    <property type="resolution" value="1.60 A"/>
    <property type="chains" value="A=30-831"/>
</dbReference>
<dbReference type="PDB" id="3O5A">
    <property type="method" value="X-ray"/>
    <property type="resolution" value="1.72 A"/>
    <property type="chains" value="A=30-831"/>
</dbReference>
<dbReference type="PDBsum" id="3ML1"/>
<dbReference type="PDBsum" id="3O5A"/>
<dbReference type="SMR" id="P39185"/>
<dbReference type="KEGG" id="reh:PHG211"/>
<dbReference type="PATRIC" id="fig|381666.6.peg.159"/>
<dbReference type="eggNOG" id="COG0243">
    <property type="taxonomic scope" value="Bacteria"/>
</dbReference>
<dbReference type="HOGENOM" id="CLU_000422_13_4_4"/>
<dbReference type="OrthoDB" id="7376058at2"/>
<dbReference type="BRENDA" id="1.9.6.1">
    <property type="organism ID" value="231"/>
</dbReference>
<dbReference type="EvolutionaryTrace" id="P39185"/>
<dbReference type="Proteomes" id="UP000008210">
    <property type="component" value="Plasmid megaplasmid pHG1"/>
</dbReference>
<dbReference type="GO" id="GO:0016020">
    <property type="term" value="C:membrane"/>
    <property type="evidence" value="ECO:0007669"/>
    <property type="project" value="TreeGrafter"/>
</dbReference>
<dbReference type="GO" id="GO:0009325">
    <property type="term" value="C:nitrate reductase complex"/>
    <property type="evidence" value="ECO:0007669"/>
    <property type="project" value="TreeGrafter"/>
</dbReference>
<dbReference type="GO" id="GO:0042597">
    <property type="term" value="C:periplasmic space"/>
    <property type="evidence" value="ECO:0007669"/>
    <property type="project" value="UniProtKB-SubCell"/>
</dbReference>
<dbReference type="GO" id="GO:0051539">
    <property type="term" value="F:4 iron, 4 sulfur cluster binding"/>
    <property type="evidence" value="ECO:0007669"/>
    <property type="project" value="UniProtKB-KW"/>
</dbReference>
<dbReference type="GO" id="GO:0009055">
    <property type="term" value="F:electron transfer activity"/>
    <property type="evidence" value="ECO:0007669"/>
    <property type="project" value="UniProtKB-UniRule"/>
</dbReference>
<dbReference type="GO" id="GO:0005506">
    <property type="term" value="F:iron ion binding"/>
    <property type="evidence" value="ECO:0007669"/>
    <property type="project" value="UniProtKB-UniRule"/>
</dbReference>
<dbReference type="GO" id="GO:0030151">
    <property type="term" value="F:molybdenum ion binding"/>
    <property type="evidence" value="ECO:0007669"/>
    <property type="project" value="InterPro"/>
</dbReference>
<dbReference type="GO" id="GO:0043546">
    <property type="term" value="F:molybdopterin cofactor binding"/>
    <property type="evidence" value="ECO:0007669"/>
    <property type="project" value="InterPro"/>
</dbReference>
<dbReference type="GO" id="GO:0050140">
    <property type="term" value="F:nitrate reductase (cytochrome) activity"/>
    <property type="evidence" value="ECO:0007669"/>
    <property type="project" value="UniProtKB-EC"/>
</dbReference>
<dbReference type="GO" id="GO:0045333">
    <property type="term" value="P:cellular respiration"/>
    <property type="evidence" value="ECO:0007669"/>
    <property type="project" value="UniProtKB-ARBA"/>
</dbReference>
<dbReference type="GO" id="GO:0006777">
    <property type="term" value="P:Mo-molybdopterin cofactor biosynthetic process"/>
    <property type="evidence" value="ECO:0007669"/>
    <property type="project" value="UniProtKB-UniRule"/>
</dbReference>
<dbReference type="GO" id="GO:0042128">
    <property type="term" value="P:nitrate assimilation"/>
    <property type="evidence" value="ECO:0007669"/>
    <property type="project" value="UniProtKB-UniRule"/>
</dbReference>
<dbReference type="CDD" id="cd02791">
    <property type="entry name" value="MopB_CT_Nitrate-R-NapA-like"/>
    <property type="match status" value="1"/>
</dbReference>
<dbReference type="CDD" id="cd02754">
    <property type="entry name" value="MopB_Nitrate-R-NapA-like"/>
    <property type="match status" value="1"/>
</dbReference>
<dbReference type="FunFam" id="2.40.40.20:FF:000005">
    <property type="entry name" value="Periplasmic nitrate reductase"/>
    <property type="match status" value="1"/>
</dbReference>
<dbReference type="Gene3D" id="2.40.40.20">
    <property type="match status" value="1"/>
</dbReference>
<dbReference type="Gene3D" id="3.30.200.210">
    <property type="match status" value="1"/>
</dbReference>
<dbReference type="Gene3D" id="3.40.50.740">
    <property type="match status" value="1"/>
</dbReference>
<dbReference type="Gene3D" id="3.40.228.10">
    <property type="entry name" value="Dimethylsulfoxide Reductase, domain 2"/>
    <property type="match status" value="1"/>
</dbReference>
<dbReference type="HAMAP" id="MF_01630">
    <property type="entry name" value="Nitrate_reduct_NapA"/>
    <property type="match status" value="1"/>
</dbReference>
<dbReference type="InterPro" id="IPR009010">
    <property type="entry name" value="Asp_de-COase-like_dom_sf"/>
</dbReference>
<dbReference type="InterPro" id="IPR041957">
    <property type="entry name" value="CT_Nitrate-R-NapA-like"/>
</dbReference>
<dbReference type="InterPro" id="IPR006657">
    <property type="entry name" value="MoPterin_dinucl-bd_dom"/>
</dbReference>
<dbReference type="InterPro" id="IPR006656">
    <property type="entry name" value="Mopterin_OxRdtase"/>
</dbReference>
<dbReference type="InterPro" id="IPR006963">
    <property type="entry name" value="Mopterin_OxRdtase_4Fe-4S_dom"/>
</dbReference>
<dbReference type="InterPro" id="IPR027467">
    <property type="entry name" value="MopterinOxRdtase_cofactor_BS"/>
</dbReference>
<dbReference type="InterPro" id="IPR010051">
    <property type="entry name" value="Periplasm_NO3_reductase_lsu"/>
</dbReference>
<dbReference type="InterPro" id="IPR050123">
    <property type="entry name" value="Prok_molybdopt-oxidoreductase"/>
</dbReference>
<dbReference type="InterPro" id="IPR006311">
    <property type="entry name" value="TAT_signal"/>
</dbReference>
<dbReference type="InterPro" id="IPR019546">
    <property type="entry name" value="TAT_signal_bac_arc"/>
</dbReference>
<dbReference type="NCBIfam" id="TIGR01706">
    <property type="entry name" value="NAPA"/>
    <property type="match status" value="1"/>
</dbReference>
<dbReference type="NCBIfam" id="NF010055">
    <property type="entry name" value="PRK13532.1"/>
    <property type="match status" value="1"/>
</dbReference>
<dbReference type="NCBIfam" id="TIGR01409">
    <property type="entry name" value="TAT_signal_seq"/>
    <property type="match status" value="1"/>
</dbReference>
<dbReference type="PANTHER" id="PTHR43105:SF11">
    <property type="entry name" value="PERIPLASMIC NITRATE REDUCTASE"/>
    <property type="match status" value="1"/>
</dbReference>
<dbReference type="PANTHER" id="PTHR43105">
    <property type="entry name" value="RESPIRATORY NITRATE REDUCTASE"/>
    <property type="match status" value="1"/>
</dbReference>
<dbReference type="Pfam" id="PF04879">
    <property type="entry name" value="Molybdop_Fe4S4"/>
    <property type="match status" value="1"/>
</dbReference>
<dbReference type="Pfam" id="PF00384">
    <property type="entry name" value="Molybdopterin"/>
    <property type="match status" value="1"/>
</dbReference>
<dbReference type="Pfam" id="PF01568">
    <property type="entry name" value="Molydop_binding"/>
    <property type="match status" value="1"/>
</dbReference>
<dbReference type="SMART" id="SM00926">
    <property type="entry name" value="Molybdop_Fe4S4"/>
    <property type="match status" value="1"/>
</dbReference>
<dbReference type="SUPFAM" id="SSF50692">
    <property type="entry name" value="ADC-like"/>
    <property type="match status" value="1"/>
</dbReference>
<dbReference type="SUPFAM" id="SSF53706">
    <property type="entry name" value="Formate dehydrogenase/DMSO reductase, domains 1-3"/>
    <property type="match status" value="1"/>
</dbReference>
<dbReference type="PROSITE" id="PS51669">
    <property type="entry name" value="4FE4S_MOW_BIS_MGD"/>
    <property type="match status" value="1"/>
</dbReference>
<dbReference type="PROSITE" id="PS00551">
    <property type="entry name" value="MOLYBDOPTERIN_PROK_1"/>
    <property type="match status" value="1"/>
</dbReference>
<dbReference type="PROSITE" id="PS51318">
    <property type="entry name" value="TAT"/>
    <property type="match status" value="1"/>
</dbReference>
<gene>
    <name evidence="1 4" type="primary">napA</name>
    <name type="ordered locus">PHG211</name>
</gene>
<name>NAPA_CUPNH</name>